<comment type="function">
    <text evidence="1">Catalyzes the interconversion of 2-phosphoglycerate and 3-phosphoglycerate.</text>
</comment>
<comment type="catalytic activity">
    <reaction evidence="1">
        <text>(2R)-2-phosphoglycerate = (2R)-3-phosphoglycerate</text>
        <dbReference type="Rhea" id="RHEA:15901"/>
        <dbReference type="ChEBI" id="CHEBI:58272"/>
        <dbReference type="ChEBI" id="CHEBI:58289"/>
        <dbReference type="EC" id="5.4.2.11"/>
    </reaction>
</comment>
<comment type="pathway">
    <text evidence="1">Carbohydrate degradation; glycolysis; pyruvate from D-glyceraldehyde 3-phosphate: step 3/5.</text>
</comment>
<comment type="subunit">
    <text evidence="1">Homodimer.</text>
</comment>
<comment type="similarity">
    <text evidence="1">Belongs to the phosphoglycerate mutase family. BPG-dependent PGAM subfamily.</text>
</comment>
<sequence length="227" mass="26092">MSLLTLIRHGQSIWNQQNRFTGWVDVSLSQSGVKEAQRAAQMLSQQRFDLAFTSELLRAQDTLYEILRHNRQCHQYVRIHDTGSQWYEHFEASPAEELELRIYVSQQLNERYYGDLQGLNKDKARQLFGDEQVHTWRRSYNVAPPNGESLAMTATRAIAYFQSHIVPALQQGKNVLVCAHGNSLRAIIMHIEKMTAAQIAAYELKTASPHIYQCNTAMDILSKQVLE</sequence>
<dbReference type="EC" id="5.4.2.11" evidence="1"/>
<dbReference type="EMBL" id="CP000388">
    <property type="protein sequence ID" value="ABG41108.1"/>
    <property type="molecule type" value="Genomic_DNA"/>
</dbReference>
<dbReference type="RefSeq" id="WP_011575371.1">
    <property type="nucleotide sequence ID" value="NC_008228.1"/>
</dbReference>
<dbReference type="SMR" id="Q15SN0"/>
<dbReference type="STRING" id="342610.Patl_2593"/>
<dbReference type="KEGG" id="pat:Patl_2593"/>
<dbReference type="eggNOG" id="COG0588">
    <property type="taxonomic scope" value="Bacteria"/>
</dbReference>
<dbReference type="HOGENOM" id="CLU_033323_1_4_6"/>
<dbReference type="OrthoDB" id="9781415at2"/>
<dbReference type="UniPathway" id="UPA00109">
    <property type="reaction ID" value="UER00186"/>
</dbReference>
<dbReference type="Proteomes" id="UP000001981">
    <property type="component" value="Chromosome"/>
</dbReference>
<dbReference type="GO" id="GO:0004619">
    <property type="term" value="F:phosphoglycerate mutase activity"/>
    <property type="evidence" value="ECO:0007669"/>
    <property type="project" value="UniProtKB-EC"/>
</dbReference>
<dbReference type="GO" id="GO:0006094">
    <property type="term" value="P:gluconeogenesis"/>
    <property type="evidence" value="ECO:0007669"/>
    <property type="project" value="UniProtKB-UniRule"/>
</dbReference>
<dbReference type="GO" id="GO:0006096">
    <property type="term" value="P:glycolytic process"/>
    <property type="evidence" value="ECO:0007669"/>
    <property type="project" value="UniProtKB-UniRule"/>
</dbReference>
<dbReference type="CDD" id="cd07067">
    <property type="entry name" value="HP_PGM_like"/>
    <property type="match status" value="1"/>
</dbReference>
<dbReference type="Gene3D" id="3.40.50.1240">
    <property type="entry name" value="Phosphoglycerate mutase-like"/>
    <property type="match status" value="1"/>
</dbReference>
<dbReference type="HAMAP" id="MF_01039">
    <property type="entry name" value="PGAM_GpmA"/>
    <property type="match status" value="1"/>
</dbReference>
<dbReference type="InterPro" id="IPR013078">
    <property type="entry name" value="His_Pase_superF_clade-1"/>
</dbReference>
<dbReference type="InterPro" id="IPR029033">
    <property type="entry name" value="His_PPase_superfam"/>
</dbReference>
<dbReference type="InterPro" id="IPR001345">
    <property type="entry name" value="PG/BPGM_mutase_AS"/>
</dbReference>
<dbReference type="InterPro" id="IPR005952">
    <property type="entry name" value="Phosphogly_mut1"/>
</dbReference>
<dbReference type="PANTHER" id="PTHR11931">
    <property type="entry name" value="PHOSPHOGLYCERATE MUTASE"/>
    <property type="match status" value="1"/>
</dbReference>
<dbReference type="Pfam" id="PF00300">
    <property type="entry name" value="His_Phos_1"/>
    <property type="match status" value="2"/>
</dbReference>
<dbReference type="PIRSF" id="PIRSF000709">
    <property type="entry name" value="6PFK_2-Ptase"/>
    <property type="match status" value="1"/>
</dbReference>
<dbReference type="SMART" id="SM00855">
    <property type="entry name" value="PGAM"/>
    <property type="match status" value="1"/>
</dbReference>
<dbReference type="SUPFAM" id="SSF53254">
    <property type="entry name" value="Phosphoglycerate mutase-like"/>
    <property type="match status" value="1"/>
</dbReference>
<dbReference type="PROSITE" id="PS00175">
    <property type="entry name" value="PG_MUTASE"/>
    <property type="match status" value="1"/>
</dbReference>
<gene>
    <name evidence="1" type="primary">gpmA</name>
    <name type="ordered locus">Patl_2593</name>
</gene>
<name>GPMA_PSEA6</name>
<organism>
    <name type="scientific">Pseudoalteromonas atlantica (strain T6c / ATCC BAA-1087)</name>
    <dbReference type="NCBI Taxonomy" id="3042615"/>
    <lineage>
        <taxon>Bacteria</taxon>
        <taxon>Pseudomonadati</taxon>
        <taxon>Pseudomonadota</taxon>
        <taxon>Gammaproteobacteria</taxon>
        <taxon>Alteromonadales</taxon>
        <taxon>Alteromonadaceae</taxon>
        <taxon>Paraglaciecola</taxon>
    </lineage>
</organism>
<evidence type="ECO:0000255" key="1">
    <source>
        <dbReference type="HAMAP-Rule" id="MF_01039"/>
    </source>
</evidence>
<keyword id="KW-0312">Gluconeogenesis</keyword>
<keyword id="KW-0324">Glycolysis</keyword>
<keyword id="KW-0413">Isomerase</keyword>
<feature type="chain" id="PRO_1000064088" description="2,3-bisphosphoglycerate-dependent phosphoglycerate mutase">
    <location>
        <begin position="1"/>
        <end position="227"/>
    </location>
</feature>
<feature type="active site" description="Tele-phosphohistidine intermediate" evidence="1">
    <location>
        <position position="9"/>
    </location>
</feature>
<feature type="active site" description="Proton donor/acceptor" evidence="1">
    <location>
        <position position="110"/>
    </location>
</feature>
<feature type="binding site" evidence="1">
    <location>
        <begin position="8"/>
        <end position="15"/>
    </location>
    <ligand>
        <name>substrate</name>
    </ligand>
</feature>
<feature type="binding site" evidence="1">
    <location>
        <begin position="21"/>
        <end position="22"/>
    </location>
    <ligand>
        <name>substrate</name>
    </ligand>
</feature>
<feature type="binding site" evidence="1">
    <location>
        <position position="58"/>
    </location>
    <ligand>
        <name>substrate</name>
    </ligand>
</feature>
<feature type="binding site" evidence="1">
    <location>
        <begin position="110"/>
        <end position="113"/>
    </location>
    <ligand>
        <name>substrate</name>
    </ligand>
</feature>
<feature type="binding site" evidence="1">
    <location>
        <position position="121"/>
    </location>
    <ligand>
        <name>substrate</name>
    </ligand>
</feature>
<feature type="binding site" evidence="1">
    <location>
        <begin position="137"/>
        <end position="138"/>
    </location>
    <ligand>
        <name>substrate</name>
    </ligand>
</feature>
<feature type="binding site" evidence="1">
    <location>
        <begin position="181"/>
        <end position="182"/>
    </location>
    <ligand>
        <name>substrate</name>
    </ligand>
</feature>
<feature type="site" description="Transition state stabilizer" evidence="1">
    <location>
        <position position="180"/>
    </location>
</feature>
<accession>Q15SN0</accession>
<reference key="1">
    <citation type="submission" date="2006-06" db="EMBL/GenBank/DDBJ databases">
        <title>Complete sequence of Pseudoalteromonas atlantica T6c.</title>
        <authorList>
            <consortium name="US DOE Joint Genome Institute"/>
            <person name="Copeland A."/>
            <person name="Lucas S."/>
            <person name="Lapidus A."/>
            <person name="Barry K."/>
            <person name="Detter J.C."/>
            <person name="Glavina del Rio T."/>
            <person name="Hammon N."/>
            <person name="Israni S."/>
            <person name="Dalin E."/>
            <person name="Tice H."/>
            <person name="Pitluck S."/>
            <person name="Saunders E."/>
            <person name="Brettin T."/>
            <person name="Bruce D."/>
            <person name="Han C."/>
            <person name="Tapia R."/>
            <person name="Gilna P."/>
            <person name="Schmutz J."/>
            <person name="Larimer F."/>
            <person name="Land M."/>
            <person name="Hauser L."/>
            <person name="Kyrpides N."/>
            <person name="Kim E."/>
            <person name="Karls A.C."/>
            <person name="Bartlett D."/>
            <person name="Higgins B.P."/>
            <person name="Richardson P."/>
        </authorList>
    </citation>
    <scope>NUCLEOTIDE SEQUENCE [LARGE SCALE GENOMIC DNA]</scope>
    <source>
        <strain>T6c / ATCC BAA-1087</strain>
    </source>
</reference>
<protein>
    <recommendedName>
        <fullName evidence="1">2,3-bisphosphoglycerate-dependent phosphoglycerate mutase</fullName>
        <shortName evidence="1">BPG-dependent PGAM</shortName>
        <shortName evidence="1">PGAM</shortName>
        <shortName evidence="1">Phosphoglyceromutase</shortName>
        <shortName evidence="1">dPGM</shortName>
        <ecNumber evidence="1">5.4.2.11</ecNumber>
    </recommendedName>
</protein>
<proteinExistence type="inferred from homology"/>